<reference key="1">
    <citation type="journal article" date="2006" name="Nat. Biotechnol.">
        <title>Complete genome sequence of the entomopathogenic and metabolically versatile soil bacterium Pseudomonas entomophila.</title>
        <authorList>
            <person name="Vodovar N."/>
            <person name="Vallenet D."/>
            <person name="Cruveiller S."/>
            <person name="Rouy Z."/>
            <person name="Barbe V."/>
            <person name="Acosta C."/>
            <person name="Cattolico L."/>
            <person name="Jubin C."/>
            <person name="Lajus A."/>
            <person name="Segurens B."/>
            <person name="Vacherie B."/>
            <person name="Wincker P."/>
            <person name="Weissenbach J."/>
            <person name="Lemaitre B."/>
            <person name="Medigue C."/>
            <person name="Boccard F."/>
        </authorList>
    </citation>
    <scope>NUCLEOTIDE SEQUENCE [LARGE SCALE GENOMIC DNA]</scope>
    <source>
        <strain>L48</strain>
    </source>
</reference>
<feature type="chain" id="PRO_1000023761" description="Transcription antitermination protein NusB">
    <location>
        <begin position="1"/>
        <end position="166"/>
    </location>
</feature>
<feature type="region of interest" description="Disordered" evidence="2">
    <location>
        <begin position="1"/>
        <end position="30"/>
    </location>
</feature>
<feature type="compositionally biased region" description="Basic and acidic residues" evidence="2">
    <location>
        <begin position="1"/>
        <end position="18"/>
    </location>
</feature>
<comment type="function">
    <text evidence="1">Involved in transcription antitermination. Required for transcription of ribosomal RNA (rRNA) genes. Binds specifically to the boxA antiterminator sequence of the ribosomal RNA (rrn) operons.</text>
</comment>
<comment type="similarity">
    <text evidence="1">Belongs to the NusB family.</text>
</comment>
<organism>
    <name type="scientific">Pseudomonas entomophila (strain L48)</name>
    <dbReference type="NCBI Taxonomy" id="384676"/>
    <lineage>
        <taxon>Bacteria</taxon>
        <taxon>Pseudomonadati</taxon>
        <taxon>Pseudomonadota</taxon>
        <taxon>Gammaproteobacteria</taxon>
        <taxon>Pseudomonadales</taxon>
        <taxon>Pseudomonadaceae</taxon>
        <taxon>Pseudomonas</taxon>
    </lineage>
</organism>
<evidence type="ECO:0000255" key="1">
    <source>
        <dbReference type="HAMAP-Rule" id="MF_00073"/>
    </source>
</evidence>
<evidence type="ECO:0000256" key="2">
    <source>
        <dbReference type="SAM" id="MobiDB-lite"/>
    </source>
</evidence>
<sequence length="166" mass="18843">MISDESDRFNPRDPKPADAGKPSKSAKRREARKLATQALYQWHMAKHSLNEVEAQFRVDNDFSDVDGAYFREILHGVPAKKVEIDEALKPCLDTPLEELDPVELSVLRLSAWEFMMRADVPYRVVINEGVELAKVFGATDGHKFVNGVLDKLAPRLREAEVRANKR</sequence>
<keyword id="KW-0694">RNA-binding</keyword>
<keyword id="KW-0804">Transcription</keyword>
<keyword id="KW-0889">Transcription antitermination</keyword>
<keyword id="KW-0805">Transcription regulation</keyword>
<gene>
    <name evidence="1" type="primary">nusB</name>
    <name type="ordered locus">PSEEN0592</name>
</gene>
<dbReference type="EMBL" id="CT573326">
    <property type="protein sequence ID" value="CAK13535.1"/>
    <property type="molecule type" value="Genomic_DNA"/>
</dbReference>
<dbReference type="RefSeq" id="WP_011531968.1">
    <property type="nucleotide sequence ID" value="NC_008027.1"/>
</dbReference>
<dbReference type="SMR" id="Q1IFL9"/>
<dbReference type="STRING" id="384676.PSEEN0592"/>
<dbReference type="GeneID" id="32803921"/>
<dbReference type="KEGG" id="pen:PSEEN0592"/>
<dbReference type="eggNOG" id="COG0781">
    <property type="taxonomic scope" value="Bacteria"/>
</dbReference>
<dbReference type="HOGENOM" id="CLU_087843_4_1_6"/>
<dbReference type="OrthoDB" id="9789556at2"/>
<dbReference type="Proteomes" id="UP000000658">
    <property type="component" value="Chromosome"/>
</dbReference>
<dbReference type="GO" id="GO:0005829">
    <property type="term" value="C:cytosol"/>
    <property type="evidence" value="ECO:0007669"/>
    <property type="project" value="TreeGrafter"/>
</dbReference>
<dbReference type="GO" id="GO:0003723">
    <property type="term" value="F:RNA binding"/>
    <property type="evidence" value="ECO:0007669"/>
    <property type="project" value="UniProtKB-UniRule"/>
</dbReference>
<dbReference type="GO" id="GO:0006353">
    <property type="term" value="P:DNA-templated transcription termination"/>
    <property type="evidence" value="ECO:0007669"/>
    <property type="project" value="UniProtKB-UniRule"/>
</dbReference>
<dbReference type="GO" id="GO:0031564">
    <property type="term" value="P:transcription antitermination"/>
    <property type="evidence" value="ECO:0007669"/>
    <property type="project" value="UniProtKB-KW"/>
</dbReference>
<dbReference type="FunFam" id="1.10.940.10:FF:000001">
    <property type="entry name" value="Transcription antitermination factor NusB"/>
    <property type="match status" value="1"/>
</dbReference>
<dbReference type="Gene3D" id="1.10.940.10">
    <property type="entry name" value="NusB-like"/>
    <property type="match status" value="1"/>
</dbReference>
<dbReference type="HAMAP" id="MF_00073">
    <property type="entry name" value="NusB"/>
    <property type="match status" value="1"/>
</dbReference>
<dbReference type="InterPro" id="IPR035926">
    <property type="entry name" value="NusB-like_sf"/>
</dbReference>
<dbReference type="InterPro" id="IPR011605">
    <property type="entry name" value="NusB_fam"/>
</dbReference>
<dbReference type="InterPro" id="IPR006027">
    <property type="entry name" value="NusB_RsmB_TIM44"/>
</dbReference>
<dbReference type="NCBIfam" id="TIGR01951">
    <property type="entry name" value="nusB"/>
    <property type="match status" value="1"/>
</dbReference>
<dbReference type="PANTHER" id="PTHR11078:SF3">
    <property type="entry name" value="ANTITERMINATION NUSB DOMAIN-CONTAINING PROTEIN"/>
    <property type="match status" value="1"/>
</dbReference>
<dbReference type="PANTHER" id="PTHR11078">
    <property type="entry name" value="N UTILIZATION SUBSTANCE PROTEIN B-RELATED"/>
    <property type="match status" value="1"/>
</dbReference>
<dbReference type="Pfam" id="PF01029">
    <property type="entry name" value="NusB"/>
    <property type="match status" value="1"/>
</dbReference>
<dbReference type="SUPFAM" id="SSF48013">
    <property type="entry name" value="NusB-like"/>
    <property type="match status" value="1"/>
</dbReference>
<protein>
    <recommendedName>
        <fullName evidence="1">Transcription antitermination protein NusB</fullName>
    </recommendedName>
    <alternativeName>
        <fullName evidence="1">Antitermination factor NusB</fullName>
    </alternativeName>
</protein>
<proteinExistence type="inferred from homology"/>
<accession>Q1IFL9</accession>
<name>NUSB_PSEE4</name>